<dbReference type="EMBL" id="AE014291">
    <property type="protein sequence ID" value="AAN29343.1"/>
    <property type="molecule type" value="Genomic_DNA"/>
</dbReference>
<dbReference type="EMBL" id="CP002997">
    <property type="protein sequence ID" value="AEM17756.1"/>
    <property type="molecule type" value="Genomic_DNA"/>
</dbReference>
<dbReference type="RefSeq" id="WP_004689493.1">
    <property type="nucleotide sequence ID" value="NZ_KN046804.1"/>
</dbReference>
<dbReference type="SMR" id="Q8G2C7"/>
<dbReference type="GeneID" id="97534226"/>
<dbReference type="KEGG" id="bms:BR0397"/>
<dbReference type="KEGG" id="bsi:BS1330_I0398"/>
<dbReference type="PATRIC" id="fig|204722.21.peg.2427"/>
<dbReference type="HOGENOM" id="CLU_015803_1_0_5"/>
<dbReference type="PhylomeDB" id="Q8G2C7"/>
<dbReference type="Proteomes" id="UP000007104">
    <property type="component" value="Chromosome I"/>
</dbReference>
<dbReference type="GO" id="GO:0005886">
    <property type="term" value="C:plasma membrane"/>
    <property type="evidence" value="ECO:0007669"/>
    <property type="project" value="UniProtKB-SubCell"/>
</dbReference>
<dbReference type="GO" id="GO:0015385">
    <property type="term" value="F:sodium:proton antiporter activity"/>
    <property type="evidence" value="ECO:0007669"/>
    <property type="project" value="TreeGrafter"/>
</dbReference>
<dbReference type="GO" id="GO:0006885">
    <property type="term" value="P:regulation of pH"/>
    <property type="evidence" value="ECO:0007669"/>
    <property type="project" value="InterPro"/>
</dbReference>
<dbReference type="Gene3D" id="1.20.1530.10">
    <property type="entry name" value="Na+/H+ antiporter like domain"/>
    <property type="match status" value="1"/>
</dbReference>
<dbReference type="HAMAP" id="MF_01844">
    <property type="entry name" value="NhaA"/>
    <property type="match status" value="1"/>
</dbReference>
<dbReference type="InterPro" id="IPR023171">
    <property type="entry name" value="Na/H_antiporter_dom_sf"/>
</dbReference>
<dbReference type="InterPro" id="IPR004670">
    <property type="entry name" value="NhaA"/>
</dbReference>
<dbReference type="NCBIfam" id="TIGR00773">
    <property type="entry name" value="NhaA"/>
    <property type="match status" value="1"/>
</dbReference>
<dbReference type="NCBIfam" id="NF007111">
    <property type="entry name" value="PRK09560.1"/>
    <property type="match status" value="1"/>
</dbReference>
<dbReference type="NCBIfam" id="NF007112">
    <property type="entry name" value="PRK09561.1"/>
    <property type="match status" value="1"/>
</dbReference>
<dbReference type="PANTHER" id="PTHR30341:SF0">
    <property type="entry name" value="NA(+)_H(+) ANTIPORTER NHAA"/>
    <property type="match status" value="1"/>
</dbReference>
<dbReference type="PANTHER" id="PTHR30341">
    <property type="entry name" value="SODIUM ION/PROTON ANTIPORTER NHAA-RELATED"/>
    <property type="match status" value="1"/>
</dbReference>
<dbReference type="Pfam" id="PF06965">
    <property type="entry name" value="Na_H_antiport_1"/>
    <property type="match status" value="1"/>
</dbReference>
<evidence type="ECO:0000255" key="1">
    <source>
        <dbReference type="HAMAP-Rule" id="MF_01844"/>
    </source>
</evidence>
<reference key="1">
    <citation type="journal article" date="2002" name="Proc. Natl. Acad. Sci. U.S.A.">
        <title>The Brucella suis genome reveals fundamental similarities between animal and plant pathogens and symbionts.</title>
        <authorList>
            <person name="Paulsen I.T."/>
            <person name="Seshadri R."/>
            <person name="Nelson K.E."/>
            <person name="Eisen J.A."/>
            <person name="Heidelberg J.F."/>
            <person name="Read T.D."/>
            <person name="Dodson R.J."/>
            <person name="Umayam L.A."/>
            <person name="Brinkac L.M."/>
            <person name="Beanan M.J."/>
            <person name="Daugherty S.C."/>
            <person name="DeBoy R.T."/>
            <person name="Durkin A.S."/>
            <person name="Kolonay J.F."/>
            <person name="Madupu R."/>
            <person name="Nelson W.C."/>
            <person name="Ayodeji B."/>
            <person name="Kraul M."/>
            <person name="Shetty J."/>
            <person name="Malek J.A."/>
            <person name="Van Aken S.E."/>
            <person name="Riedmuller S."/>
            <person name="Tettelin H."/>
            <person name="Gill S.R."/>
            <person name="White O."/>
            <person name="Salzberg S.L."/>
            <person name="Hoover D.L."/>
            <person name="Lindler L.E."/>
            <person name="Halling S.M."/>
            <person name="Boyle S.M."/>
            <person name="Fraser C.M."/>
        </authorList>
    </citation>
    <scope>NUCLEOTIDE SEQUENCE [LARGE SCALE GENOMIC DNA]</scope>
    <source>
        <strain>1330</strain>
    </source>
</reference>
<reference key="2">
    <citation type="journal article" date="2011" name="J. Bacteriol.">
        <title>Revised genome sequence of Brucella suis 1330.</title>
        <authorList>
            <person name="Tae H."/>
            <person name="Shallom S."/>
            <person name="Settlage R."/>
            <person name="Preston D."/>
            <person name="Adams L.G."/>
            <person name="Garner H.R."/>
        </authorList>
    </citation>
    <scope>NUCLEOTIDE SEQUENCE [LARGE SCALE GENOMIC DNA]</scope>
    <source>
        <strain>1330</strain>
    </source>
</reference>
<proteinExistence type="inferred from homology"/>
<gene>
    <name evidence="1" type="primary">nhaA</name>
    <name type="ordered locus">BR0397</name>
    <name type="ordered locus">BS1330_I0398</name>
</gene>
<protein>
    <recommendedName>
        <fullName evidence="1">Na(+)/H(+) antiporter NhaA</fullName>
    </recommendedName>
    <alternativeName>
        <fullName evidence="1">Sodium/proton antiporter NhaA</fullName>
    </alternativeName>
</protein>
<sequence>MNHSPQSARPVSIMRRFLDSEAAGGITLMAAAALALIVANSPFAQTYFDALHLYIGPLSLAHWINDALMAIFFLLVGLEIKREMLDGQLASWPNRMLPGIAAAGGVILPAIIFAVLNHDNPAKLRGWAVPSATDIAFALGVLSLLGSRAPSSLKVFLATLAILDDLAAVVIIAIFYTAEISMPYLGAAFITAAVLFVMNRMGVVKLLPYLISAVILWFFVFNSGVHATVAGVVAALMIPLKPAPGRPDDMTSPLHKLEHALAKPVAFIVVPIFGFANAGISFKGLEASVLGDTLTLGILLGLFLGKQFGVFGAAWLAIKTGLAEKPMGASWVQLYGVAILCGIGFTMSIFIGLLSFPSDLMQTETKIGVLSGSALSAICGYLLLRAAARPKRG</sequence>
<accession>Q8G2C7</accession>
<accession>G0K6L9</accession>
<organism>
    <name type="scientific">Brucella suis biovar 1 (strain 1330)</name>
    <dbReference type="NCBI Taxonomy" id="204722"/>
    <lineage>
        <taxon>Bacteria</taxon>
        <taxon>Pseudomonadati</taxon>
        <taxon>Pseudomonadota</taxon>
        <taxon>Alphaproteobacteria</taxon>
        <taxon>Hyphomicrobiales</taxon>
        <taxon>Brucellaceae</taxon>
        <taxon>Brucella/Ochrobactrum group</taxon>
        <taxon>Brucella</taxon>
    </lineage>
</organism>
<name>NHAA_BRUSU</name>
<comment type="function">
    <text evidence="1">Na(+)/H(+) antiporter that extrudes sodium in exchange for external protons.</text>
</comment>
<comment type="catalytic activity">
    <reaction evidence="1">
        <text>Na(+)(in) + 2 H(+)(out) = Na(+)(out) + 2 H(+)(in)</text>
        <dbReference type="Rhea" id="RHEA:29251"/>
        <dbReference type="ChEBI" id="CHEBI:15378"/>
        <dbReference type="ChEBI" id="CHEBI:29101"/>
    </reaction>
    <physiologicalReaction direction="left-to-right" evidence="1">
        <dbReference type="Rhea" id="RHEA:29252"/>
    </physiologicalReaction>
</comment>
<comment type="subcellular location">
    <subcellularLocation>
        <location evidence="1">Cell inner membrane</location>
        <topology evidence="1">Multi-pass membrane protein</topology>
    </subcellularLocation>
</comment>
<comment type="similarity">
    <text evidence="1">Belongs to the NhaA Na(+)/H(+) (TC 2.A.33) antiporter family.</text>
</comment>
<keyword id="KW-0050">Antiport</keyword>
<keyword id="KW-0997">Cell inner membrane</keyword>
<keyword id="KW-1003">Cell membrane</keyword>
<keyword id="KW-0406">Ion transport</keyword>
<keyword id="KW-0472">Membrane</keyword>
<keyword id="KW-0915">Sodium</keyword>
<keyword id="KW-0739">Sodium transport</keyword>
<keyword id="KW-0812">Transmembrane</keyword>
<keyword id="KW-1133">Transmembrane helix</keyword>
<keyword id="KW-0813">Transport</keyword>
<feature type="chain" id="PRO_0000334247" description="Na(+)/H(+) antiporter NhaA">
    <location>
        <begin position="1"/>
        <end position="393"/>
    </location>
</feature>
<feature type="transmembrane region" description="Helical" evidence="1">
    <location>
        <begin position="23"/>
        <end position="43"/>
    </location>
</feature>
<feature type="transmembrane region" description="Helical" evidence="1">
    <location>
        <begin position="58"/>
        <end position="78"/>
    </location>
</feature>
<feature type="transmembrane region" description="Helical" evidence="1">
    <location>
        <begin position="96"/>
        <end position="116"/>
    </location>
</feature>
<feature type="transmembrane region" description="Helical" evidence="1">
    <location>
        <begin position="126"/>
        <end position="146"/>
    </location>
</feature>
<feature type="transmembrane region" description="Helical" evidence="1">
    <location>
        <begin position="155"/>
        <end position="175"/>
    </location>
</feature>
<feature type="transmembrane region" description="Helical" evidence="1">
    <location>
        <begin position="178"/>
        <end position="198"/>
    </location>
</feature>
<feature type="transmembrane region" description="Helical" evidence="1">
    <location>
        <begin position="201"/>
        <end position="221"/>
    </location>
</feature>
<feature type="transmembrane region" description="Helical" evidence="1">
    <location>
        <begin position="224"/>
        <end position="244"/>
    </location>
</feature>
<feature type="transmembrane region" description="Helical" evidence="1">
    <location>
        <begin position="265"/>
        <end position="285"/>
    </location>
</feature>
<feature type="transmembrane region" description="Helical" evidence="1">
    <location>
        <begin position="298"/>
        <end position="318"/>
    </location>
</feature>
<feature type="transmembrane region" description="Helical" evidence="1">
    <location>
        <begin position="334"/>
        <end position="354"/>
    </location>
</feature>
<feature type="transmembrane region" description="Helical" evidence="1">
    <location>
        <begin position="367"/>
        <end position="387"/>
    </location>
</feature>